<reference key="1">
    <citation type="journal article" date="2006" name="Proc. Natl. Acad. Sci. U.S.A.">
        <title>Highly conserved syntenic blocks at the vertebrate Hox loci and conserved regulatory elements within and outside Hox gene clusters.</title>
        <authorList>
            <person name="Lee A.P."/>
            <person name="Koh E.G.L."/>
            <person name="Tay A."/>
            <person name="Brenner S."/>
            <person name="Venkatesh B."/>
        </authorList>
    </citation>
    <scope>NUCLEOTIDE SEQUENCE [GENOMIC DNA]</scope>
</reference>
<keyword id="KW-0217">Developmental protein</keyword>
<keyword id="KW-0238">DNA-binding</keyword>
<keyword id="KW-0371">Homeobox</keyword>
<keyword id="KW-0539">Nucleus</keyword>
<keyword id="KW-1185">Reference proteome</keyword>
<keyword id="KW-0804">Transcription</keyword>
<keyword id="KW-0805">Transcription regulation</keyword>
<gene>
    <name type="primary">hoxa2b</name>
</gene>
<proteinExistence type="inferred from homology"/>
<evidence type="ECO:0000250" key="1"/>
<evidence type="ECO:0000255" key="2">
    <source>
        <dbReference type="PROSITE-ProRule" id="PRU00108"/>
    </source>
</evidence>
<evidence type="ECO:0000256" key="3">
    <source>
        <dbReference type="SAM" id="MobiDB-lite"/>
    </source>
</evidence>
<evidence type="ECO:0000305" key="4"/>
<dbReference type="EMBL" id="DQ481664">
    <property type="protein sequence ID" value="ABF22402.1"/>
    <property type="molecule type" value="Genomic_DNA"/>
</dbReference>
<dbReference type="SMR" id="Q1KKZ2"/>
<dbReference type="STRING" id="31033.ENSTRUP00000039163"/>
<dbReference type="InParanoid" id="Q1KKZ2"/>
<dbReference type="Proteomes" id="UP000005226">
    <property type="component" value="Unplaced"/>
</dbReference>
<dbReference type="GO" id="GO:0005634">
    <property type="term" value="C:nucleus"/>
    <property type="evidence" value="ECO:0007669"/>
    <property type="project" value="UniProtKB-SubCell"/>
</dbReference>
<dbReference type="GO" id="GO:0000981">
    <property type="term" value="F:DNA-binding transcription factor activity, RNA polymerase II-specific"/>
    <property type="evidence" value="ECO:0007669"/>
    <property type="project" value="InterPro"/>
</dbReference>
<dbReference type="GO" id="GO:0000978">
    <property type="term" value="F:RNA polymerase II cis-regulatory region sequence-specific DNA binding"/>
    <property type="evidence" value="ECO:0007669"/>
    <property type="project" value="TreeGrafter"/>
</dbReference>
<dbReference type="CDD" id="cd00086">
    <property type="entry name" value="homeodomain"/>
    <property type="match status" value="1"/>
</dbReference>
<dbReference type="FunFam" id="1.10.10.60:FF:000176">
    <property type="entry name" value="pancreas/duodenum homeobox protein 1"/>
    <property type="match status" value="1"/>
</dbReference>
<dbReference type="Gene3D" id="1.10.10.60">
    <property type="entry name" value="Homeodomain-like"/>
    <property type="match status" value="1"/>
</dbReference>
<dbReference type="InterPro" id="IPR001356">
    <property type="entry name" value="HD"/>
</dbReference>
<dbReference type="InterPro" id="IPR020479">
    <property type="entry name" value="HD_metazoa"/>
</dbReference>
<dbReference type="InterPro" id="IPR017970">
    <property type="entry name" value="Homeobox_CS"/>
</dbReference>
<dbReference type="InterPro" id="IPR009057">
    <property type="entry name" value="Homeodomain-like_sf"/>
</dbReference>
<dbReference type="PANTHER" id="PTHR45664:SF3">
    <property type="entry name" value="HOMEOBOX PROTEIN HOX-A2"/>
    <property type="match status" value="1"/>
</dbReference>
<dbReference type="PANTHER" id="PTHR45664">
    <property type="entry name" value="PROTEIN ZERKNUELLT 1-RELATED"/>
    <property type="match status" value="1"/>
</dbReference>
<dbReference type="Pfam" id="PF00046">
    <property type="entry name" value="Homeodomain"/>
    <property type="match status" value="1"/>
</dbReference>
<dbReference type="PRINTS" id="PR00024">
    <property type="entry name" value="HOMEOBOX"/>
</dbReference>
<dbReference type="SMART" id="SM00389">
    <property type="entry name" value="HOX"/>
    <property type="match status" value="1"/>
</dbReference>
<dbReference type="SUPFAM" id="SSF46689">
    <property type="entry name" value="Homeodomain-like"/>
    <property type="match status" value="1"/>
</dbReference>
<dbReference type="PROSITE" id="PS00027">
    <property type="entry name" value="HOMEOBOX_1"/>
    <property type="match status" value="1"/>
</dbReference>
<dbReference type="PROSITE" id="PS50071">
    <property type="entry name" value="HOMEOBOX_2"/>
    <property type="match status" value="1"/>
</dbReference>
<accession>Q1KKZ2</accession>
<comment type="function">
    <text evidence="1">Sequence-specific transcription factor which is part of a developmental regulatory system that provides cells with specific positional identities on the anterior-posterior axis.</text>
</comment>
<comment type="subcellular location">
    <subcellularLocation>
        <location evidence="2">Nucleus</location>
    </subcellularLocation>
</comment>
<comment type="similarity">
    <text evidence="4">Belongs to the Antp homeobox family. Proboscipedia subfamily.</text>
</comment>
<protein>
    <recommendedName>
        <fullName>Homeobox protein Hox-A2b</fullName>
    </recommendedName>
</protein>
<sequence length="300" mass="33353">MNYEFGRESGFINSQPSLAECLTSLSNPVGDAFQSSSIKSSALSPSTLIPPPFEQTVIGLNPGTHPRHSRSKQSSPEAIDVGPGGGTSRRLRTAYTNTQLLELEKEFHFNKYLCRPRRVEIAALLDLTEKQVKVWFQNRRMKHKRQTHCKENRDSEGKYACLDDEPEDEFEQEAGGSVAATLLERERQFQQNQFTSQQCLNGNNGESQSLSAALLNSNEKNLKHFPNVAPTVPNCASTIEADNRHSPGLDLPLQDFPVFSPSSFSPSFSDSTESSLPLSSETFDLFSETLTTIDLQNLSY</sequence>
<name>HXA2B_TAKRU</name>
<feature type="chain" id="PRO_0000265964" description="Homeobox protein Hox-A2b">
    <location>
        <begin position="1"/>
        <end position="300"/>
    </location>
</feature>
<feature type="DNA-binding region" description="Homeobox" evidence="2">
    <location>
        <begin position="88"/>
        <end position="147"/>
    </location>
</feature>
<feature type="region of interest" description="Disordered" evidence="3">
    <location>
        <begin position="59"/>
        <end position="90"/>
    </location>
</feature>
<organism>
    <name type="scientific">Takifugu rubripes</name>
    <name type="common">Japanese pufferfish</name>
    <name type="synonym">Fugu rubripes</name>
    <dbReference type="NCBI Taxonomy" id="31033"/>
    <lineage>
        <taxon>Eukaryota</taxon>
        <taxon>Metazoa</taxon>
        <taxon>Chordata</taxon>
        <taxon>Craniata</taxon>
        <taxon>Vertebrata</taxon>
        <taxon>Euteleostomi</taxon>
        <taxon>Actinopterygii</taxon>
        <taxon>Neopterygii</taxon>
        <taxon>Teleostei</taxon>
        <taxon>Neoteleostei</taxon>
        <taxon>Acanthomorphata</taxon>
        <taxon>Eupercaria</taxon>
        <taxon>Tetraodontiformes</taxon>
        <taxon>Tetradontoidea</taxon>
        <taxon>Tetraodontidae</taxon>
        <taxon>Takifugu</taxon>
    </lineage>
</organism>